<gene>
    <name type="ordered locus">MIMI_L629</name>
</gene>
<name>YL629_MIMIV</name>
<accession>Q5UR79</accession>
<protein>
    <recommendedName>
        <fullName>Uncharacterized protein L629</fullName>
    </recommendedName>
</protein>
<sequence>MCIIADSVKNVSNTKIASFHVAYSVDNNKNMIPSQLIVYAAKIDSTVSSNAIILPVYNPGNDSSKIIPLDLSNFSDFFDKLSTIYGRWFIDDNKIQALSYRNGQISVTNSILQVYTVGDYRFSIMPSKKYFNNLDKSQLNVDPRSKISIDQHNNDYSFIVFQFYQKGVIDITPFGYLCPTNSTSQIVPTIHGHPENNDFMPMDMGINISRMQVFSSIDQFNTPIGGRHNNNFENEAEFDHEIYLLVKDTISAGKSTTQDVIDINNLLKKITHDYANNQIRLFVPKNFIPGKIKITGKKPNRNIFVGPNNYRFMNDLLIDNQK</sequence>
<organism>
    <name type="scientific">Acanthamoeba polyphaga mimivirus</name>
    <name type="common">APMV</name>
    <dbReference type="NCBI Taxonomy" id="212035"/>
    <lineage>
        <taxon>Viruses</taxon>
        <taxon>Varidnaviria</taxon>
        <taxon>Bamfordvirae</taxon>
        <taxon>Nucleocytoviricota</taxon>
        <taxon>Megaviricetes</taxon>
        <taxon>Imitervirales</taxon>
        <taxon>Mimiviridae</taxon>
        <taxon>Megamimivirinae</taxon>
        <taxon>Mimivirus</taxon>
        <taxon>Mimivirus bradfordmassiliense</taxon>
    </lineage>
</organism>
<keyword id="KW-1185">Reference proteome</keyword>
<proteinExistence type="predicted"/>
<feature type="chain" id="PRO_0000243975" description="Uncharacterized protein L629">
    <location>
        <begin position="1"/>
        <end position="322"/>
    </location>
</feature>
<dbReference type="EMBL" id="AY653733">
    <property type="protein sequence ID" value="AAV50890.1"/>
    <property type="molecule type" value="Genomic_DNA"/>
</dbReference>
<dbReference type="KEGG" id="vg:9925271"/>
<dbReference type="OrthoDB" id="11052at10239"/>
<dbReference type="Proteomes" id="UP000001134">
    <property type="component" value="Genome"/>
</dbReference>
<organismHost>
    <name type="scientific">Acanthamoeba polyphaga</name>
    <name type="common">Amoeba</name>
    <dbReference type="NCBI Taxonomy" id="5757"/>
</organismHost>
<reference key="1">
    <citation type="journal article" date="2004" name="Science">
        <title>The 1.2-megabase genome sequence of Mimivirus.</title>
        <authorList>
            <person name="Raoult D."/>
            <person name="Audic S."/>
            <person name="Robert C."/>
            <person name="Abergel C."/>
            <person name="Renesto P."/>
            <person name="Ogata H."/>
            <person name="La Scola B."/>
            <person name="Susan M."/>
            <person name="Claverie J.-M."/>
        </authorList>
    </citation>
    <scope>NUCLEOTIDE SEQUENCE [LARGE SCALE GENOMIC DNA]</scope>
    <source>
        <strain>Rowbotham-Bradford</strain>
    </source>
</reference>